<name>LUXS_SHIF8</name>
<reference key="1">
    <citation type="journal article" date="2006" name="BMC Genomics">
        <title>Complete genome sequence of Shigella flexneri 5b and comparison with Shigella flexneri 2a.</title>
        <authorList>
            <person name="Nie H."/>
            <person name="Yang F."/>
            <person name="Zhang X."/>
            <person name="Yang J."/>
            <person name="Chen L."/>
            <person name="Wang J."/>
            <person name="Xiong Z."/>
            <person name="Peng J."/>
            <person name="Sun L."/>
            <person name="Dong J."/>
            <person name="Xue Y."/>
            <person name="Xu X."/>
            <person name="Chen S."/>
            <person name="Yao Z."/>
            <person name="Shen Y."/>
            <person name="Jin Q."/>
        </authorList>
    </citation>
    <scope>NUCLEOTIDE SEQUENCE [LARGE SCALE GENOMIC DNA]</scope>
    <source>
        <strain>8401</strain>
    </source>
</reference>
<sequence length="171" mass="19390">MPLLDSFTVDHTRMEAPAVRVAKTMNTPHGDAITVFDLRFCVPNKEVMPERGSHTLEHLFAGFMRNHLNGNGVEIIDISPMGCRTGFYMSLIGTPDEQRVADAWKAAMEDVLKVQDQNQIPELNVYQCGTYQMHSLQEAQDIARSILERDVRINSNEELALPKEKLQELHI</sequence>
<dbReference type="EC" id="4.4.1.21" evidence="1"/>
<dbReference type="EMBL" id="CP000266">
    <property type="protein sequence ID" value="ABF04897.1"/>
    <property type="molecule type" value="Genomic_DNA"/>
</dbReference>
<dbReference type="RefSeq" id="WP_001130216.1">
    <property type="nucleotide sequence ID" value="NC_008258.1"/>
</dbReference>
<dbReference type="SMR" id="Q0T1B8"/>
<dbReference type="KEGG" id="sfv:SFV_2817"/>
<dbReference type="HOGENOM" id="CLU_107531_2_0_6"/>
<dbReference type="Proteomes" id="UP000000659">
    <property type="component" value="Chromosome"/>
</dbReference>
<dbReference type="GO" id="GO:0005506">
    <property type="term" value="F:iron ion binding"/>
    <property type="evidence" value="ECO:0007669"/>
    <property type="project" value="InterPro"/>
</dbReference>
<dbReference type="GO" id="GO:0043768">
    <property type="term" value="F:S-ribosylhomocysteine lyase activity"/>
    <property type="evidence" value="ECO:0007669"/>
    <property type="project" value="UniProtKB-UniRule"/>
</dbReference>
<dbReference type="GO" id="GO:0009372">
    <property type="term" value="P:quorum sensing"/>
    <property type="evidence" value="ECO:0007669"/>
    <property type="project" value="UniProtKB-UniRule"/>
</dbReference>
<dbReference type="FunFam" id="3.30.1360.80:FF:000001">
    <property type="entry name" value="S-ribosylhomocysteine lyase"/>
    <property type="match status" value="1"/>
</dbReference>
<dbReference type="Gene3D" id="3.30.1360.80">
    <property type="entry name" value="S-ribosylhomocysteinase (LuxS)"/>
    <property type="match status" value="1"/>
</dbReference>
<dbReference type="HAMAP" id="MF_00091">
    <property type="entry name" value="LuxS"/>
    <property type="match status" value="1"/>
</dbReference>
<dbReference type="InterPro" id="IPR037005">
    <property type="entry name" value="LuxS_sf"/>
</dbReference>
<dbReference type="InterPro" id="IPR011249">
    <property type="entry name" value="Metalloenz_LuxS/M16"/>
</dbReference>
<dbReference type="InterPro" id="IPR003815">
    <property type="entry name" value="S-ribosylhomocysteinase"/>
</dbReference>
<dbReference type="NCBIfam" id="NF002602">
    <property type="entry name" value="PRK02260.1-2"/>
    <property type="match status" value="1"/>
</dbReference>
<dbReference type="PANTHER" id="PTHR35799">
    <property type="entry name" value="S-RIBOSYLHOMOCYSTEINE LYASE"/>
    <property type="match status" value="1"/>
</dbReference>
<dbReference type="PANTHER" id="PTHR35799:SF1">
    <property type="entry name" value="S-RIBOSYLHOMOCYSTEINE LYASE"/>
    <property type="match status" value="1"/>
</dbReference>
<dbReference type="Pfam" id="PF02664">
    <property type="entry name" value="LuxS"/>
    <property type="match status" value="1"/>
</dbReference>
<dbReference type="PIRSF" id="PIRSF006160">
    <property type="entry name" value="AI2"/>
    <property type="match status" value="1"/>
</dbReference>
<dbReference type="PRINTS" id="PR01487">
    <property type="entry name" value="LUXSPROTEIN"/>
</dbReference>
<dbReference type="SUPFAM" id="SSF63411">
    <property type="entry name" value="LuxS/MPP-like metallohydrolase"/>
    <property type="match status" value="1"/>
</dbReference>
<proteinExistence type="inferred from homology"/>
<gene>
    <name evidence="1" type="primary">luxS</name>
    <name type="ordered locus">SFV_2817</name>
</gene>
<protein>
    <recommendedName>
        <fullName evidence="1">S-ribosylhomocysteine lyase</fullName>
        <ecNumber evidence="1">4.4.1.21</ecNumber>
    </recommendedName>
    <alternativeName>
        <fullName evidence="1">AI-2 synthesis protein</fullName>
    </alternativeName>
    <alternativeName>
        <fullName evidence="1">Autoinducer-2 production protein LuxS</fullName>
    </alternativeName>
</protein>
<evidence type="ECO:0000255" key="1">
    <source>
        <dbReference type="HAMAP-Rule" id="MF_00091"/>
    </source>
</evidence>
<keyword id="KW-0071">Autoinducer synthesis</keyword>
<keyword id="KW-0408">Iron</keyword>
<keyword id="KW-0456">Lyase</keyword>
<keyword id="KW-0479">Metal-binding</keyword>
<keyword id="KW-0673">Quorum sensing</keyword>
<organism>
    <name type="scientific">Shigella flexneri serotype 5b (strain 8401)</name>
    <dbReference type="NCBI Taxonomy" id="373384"/>
    <lineage>
        <taxon>Bacteria</taxon>
        <taxon>Pseudomonadati</taxon>
        <taxon>Pseudomonadota</taxon>
        <taxon>Gammaproteobacteria</taxon>
        <taxon>Enterobacterales</taxon>
        <taxon>Enterobacteriaceae</taxon>
        <taxon>Shigella</taxon>
    </lineage>
</organism>
<comment type="function">
    <text evidence="1">Involved in the synthesis of autoinducer 2 (AI-2) which is secreted by bacteria and is used to communicate both the cell density and the metabolic potential of the environment. The regulation of gene expression in response to changes in cell density is called quorum sensing. Catalyzes the transformation of S-ribosylhomocysteine (RHC) to homocysteine (HC) and 4,5-dihydroxy-2,3-pentadione (DPD).</text>
</comment>
<comment type="catalytic activity">
    <reaction evidence="1">
        <text>S-(5-deoxy-D-ribos-5-yl)-L-homocysteine = (S)-4,5-dihydroxypentane-2,3-dione + L-homocysteine</text>
        <dbReference type="Rhea" id="RHEA:17753"/>
        <dbReference type="ChEBI" id="CHEBI:29484"/>
        <dbReference type="ChEBI" id="CHEBI:58195"/>
        <dbReference type="ChEBI" id="CHEBI:58199"/>
        <dbReference type="EC" id="4.4.1.21"/>
    </reaction>
</comment>
<comment type="cofactor">
    <cofactor evidence="1">
        <name>Fe cation</name>
        <dbReference type="ChEBI" id="CHEBI:24875"/>
    </cofactor>
    <text evidence="1">Binds 1 Fe cation per subunit.</text>
</comment>
<comment type="subunit">
    <text evidence="1">Homodimer.</text>
</comment>
<comment type="similarity">
    <text evidence="1">Belongs to the LuxS family.</text>
</comment>
<accession>Q0T1B8</accession>
<feature type="chain" id="PRO_0000298032" description="S-ribosylhomocysteine lyase">
    <location>
        <begin position="1"/>
        <end position="171"/>
    </location>
</feature>
<feature type="binding site" evidence="1">
    <location>
        <position position="54"/>
    </location>
    <ligand>
        <name>Fe cation</name>
        <dbReference type="ChEBI" id="CHEBI:24875"/>
    </ligand>
</feature>
<feature type="binding site" evidence="1">
    <location>
        <position position="58"/>
    </location>
    <ligand>
        <name>Fe cation</name>
        <dbReference type="ChEBI" id="CHEBI:24875"/>
    </ligand>
</feature>
<feature type="binding site" evidence="1">
    <location>
        <position position="128"/>
    </location>
    <ligand>
        <name>Fe cation</name>
        <dbReference type="ChEBI" id="CHEBI:24875"/>
    </ligand>
</feature>